<reference key="1">
    <citation type="journal article" date="2004" name="Genome Res.">
        <title>The genome sequence of Mycoplasma mycoides subsp. mycoides SC type strain PG1T, the causative agent of contagious bovine pleuropneumonia (CBPP).</title>
        <authorList>
            <person name="Westberg J."/>
            <person name="Persson A."/>
            <person name="Holmberg A."/>
            <person name="Goesmann A."/>
            <person name="Lundeberg J."/>
            <person name="Johansson K.-E."/>
            <person name="Pettersson B."/>
            <person name="Uhlen M."/>
        </authorList>
    </citation>
    <scope>NUCLEOTIDE SEQUENCE [LARGE SCALE GENOMIC DNA]</scope>
    <source>
        <strain>CCUG 32753 / NCTC 10114 / PG1</strain>
    </source>
</reference>
<gene>
    <name type="primary">gmk</name>
    <name type="ordered locus">MSC_0218</name>
</gene>
<dbReference type="EC" id="2.7.4.8"/>
<dbReference type="EMBL" id="BX293980">
    <property type="protein sequence ID" value="CAE76861.1"/>
    <property type="molecule type" value="Genomic_DNA"/>
</dbReference>
<dbReference type="RefSeq" id="NP_975219.1">
    <property type="nucleotide sequence ID" value="NC_005364.2"/>
</dbReference>
<dbReference type="RefSeq" id="WP_011166418.1">
    <property type="nucleotide sequence ID" value="NC_005364.2"/>
</dbReference>
<dbReference type="SMR" id="Q6MU25"/>
<dbReference type="STRING" id="272632.MSC_0218"/>
<dbReference type="KEGG" id="mmy:MSC_0218"/>
<dbReference type="PATRIC" id="fig|272632.4.peg.232"/>
<dbReference type="eggNOG" id="COG0194">
    <property type="taxonomic scope" value="Bacteria"/>
</dbReference>
<dbReference type="HOGENOM" id="CLU_001715_1_0_14"/>
<dbReference type="Proteomes" id="UP000001016">
    <property type="component" value="Chromosome"/>
</dbReference>
<dbReference type="GO" id="GO:0005829">
    <property type="term" value="C:cytosol"/>
    <property type="evidence" value="ECO:0007669"/>
    <property type="project" value="TreeGrafter"/>
</dbReference>
<dbReference type="GO" id="GO:0005524">
    <property type="term" value="F:ATP binding"/>
    <property type="evidence" value="ECO:0007669"/>
    <property type="project" value="UniProtKB-UniRule"/>
</dbReference>
<dbReference type="GO" id="GO:0004385">
    <property type="term" value="F:guanylate kinase activity"/>
    <property type="evidence" value="ECO:0007669"/>
    <property type="project" value="UniProtKB-UniRule"/>
</dbReference>
<dbReference type="CDD" id="cd00071">
    <property type="entry name" value="GMPK"/>
    <property type="match status" value="1"/>
</dbReference>
<dbReference type="FunFam" id="3.30.63.10:FF:000002">
    <property type="entry name" value="Guanylate kinase 1"/>
    <property type="match status" value="1"/>
</dbReference>
<dbReference type="Gene3D" id="3.30.63.10">
    <property type="entry name" value="Guanylate Kinase phosphate binding domain"/>
    <property type="match status" value="1"/>
</dbReference>
<dbReference type="Gene3D" id="3.40.50.300">
    <property type="entry name" value="P-loop containing nucleotide triphosphate hydrolases"/>
    <property type="match status" value="1"/>
</dbReference>
<dbReference type="HAMAP" id="MF_00328">
    <property type="entry name" value="Guanylate_kinase"/>
    <property type="match status" value="1"/>
</dbReference>
<dbReference type="InterPro" id="IPR008145">
    <property type="entry name" value="GK/Ca_channel_bsu"/>
</dbReference>
<dbReference type="InterPro" id="IPR008144">
    <property type="entry name" value="Guanylate_kin-like_dom"/>
</dbReference>
<dbReference type="InterPro" id="IPR017665">
    <property type="entry name" value="Guanylate_kinase"/>
</dbReference>
<dbReference type="InterPro" id="IPR020590">
    <property type="entry name" value="Guanylate_kinase_CS"/>
</dbReference>
<dbReference type="InterPro" id="IPR027417">
    <property type="entry name" value="P-loop_NTPase"/>
</dbReference>
<dbReference type="NCBIfam" id="TIGR03263">
    <property type="entry name" value="guanyl_kin"/>
    <property type="match status" value="1"/>
</dbReference>
<dbReference type="PANTHER" id="PTHR23117:SF13">
    <property type="entry name" value="GUANYLATE KINASE"/>
    <property type="match status" value="1"/>
</dbReference>
<dbReference type="PANTHER" id="PTHR23117">
    <property type="entry name" value="GUANYLATE KINASE-RELATED"/>
    <property type="match status" value="1"/>
</dbReference>
<dbReference type="Pfam" id="PF00625">
    <property type="entry name" value="Guanylate_kin"/>
    <property type="match status" value="1"/>
</dbReference>
<dbReference type="SMART" id="SM00072">
    <property type="entry name" value="GuKc"/>
    <property type="match status" value="1"/>
</dbReference>
<dbReference type="SUPFAM" id="SSF52540">
    <property type="entry name" value="P-loop containing nucleoside triphosphate hydrolases"/>
    <property type="match status" value="1"/>
</dbReference>
<dbReference type="PROSITE" id="PS00856">
    <property type="entry name" value="GUANYLATE_KINASE_1"/>
    <property type="match status" value="1"/>
</dbReference>
<dbReference type="PROSITE" id="PS50052">
    <property type="entry name" value="GUANYLATE_KINASE_2"/>
    <property type="match status" value="1"/>
</dbReference>
<feature type="chain" id="PRO_0000266353" description="Guanylate kinase">
    <location>
        <begin position="1"/>
        <end position="297"/>
    </location>
</feature>
<feature type="domain" description="Guanylate kinase-like">
    <location>
        <begin position="4"/>
        <end position="183"/>
    </location>
</feature>
<feature type="region of interest" description="Unknown">
    <location>
        <begin position="204"/>
        <end position="297"/>
    </location>
</feature>
<feature type="binding site" evidence="1">
    <location>
        <begin position="11"/>
        <end position="18"/>
    </location>
    <ligand>
        <name>ATP</name>
        <dbReference type="ChEBI" id="CHEBI:30616"/>
    </ligand>
</feature>
<accession>Q6MU25</accession>
<protein>
    <recommendedName>
        <fullName>Guanylate kinase</fullName>
        <ecNumber>2.7.4.8</ecNumber>
    </recommendedName>
    <alternativeName>
        <fullName>GMP kinase</fullName>
    </alternativeName>
</protein>
<sequence length="297" mass="34274">MKKGKMIIISGPSGVGKGSVNGELLQNPDLHLRYSVSMTTRKPRNGEVDGVNYFFVSNEEFAKAIVNDELIEYAHFVGNSYGTPRKYVEQELKKGNNVILEIEVDGATQVLNKEPNVLSIFLMPPNPTELANRIRGRQTEDEEKIKARLDKALLEIPLKHNYQYVIENDNVPNAVAKITDVLHLEGLTDIKTPTVYERLEQIVEQIVKEKYMYFVNNWETNVKLLAKNEEEKNKAKNFDAETYLIKLLTKKVYHKVLGHGDFSKLLDKDFVDFKIQKLMFKINFFSVEQKHYNNDEF</sequence>
<comment type="function">
    <text evidence="1">Essential for recycling GMP and indirectly, cGMP.</text>
</comment>
<comment type="catalytic activity">
    <reaction>
        <text>GMP + ATP = GDP + ADP</text>
        <dbReference type="Rhea" id="RHEA:20780"/>
        <dbReference type="ChEBI" id="CHEBI:30616"/>
        <dbReference type="ChEBI" id="CHEBI:58115"/>
        <dbReference type="ChEBI" id="CHEBI:58189"/>
        <dbReference type="ChEBI" id="CHEBI:456216"/>
        <dbReference type="EC" id="2.7.4.8"/>
    </reaction>
</comment>
<comment type="subcellular location">
    <subcellularLocation>
        <location evidence="1">Cytoplasm</location>
    </subcellularLocation>
</comment>
<comment type="similarity">
    <text evidence="2">Belongs to the guanylate kinase family.</text>
</comment>
<proteinExistence type="inferred from homology"/>
<name>KGUA_MYCMS</name>
<organism>
    <name type="scientific">Mycoplasma mycoides subsp. mycoides SC (strain CCUG 32753 / NCTC 10114 / PG1)</name>
    <dbReference type="NCBI Taxonomy" id="272632"/>
    <lineage>
        <taxon>Bacteria</taxon>
        <taxon>Bacillati</taxon>
        <taxon>Mycoplasmatota</taxon>
        <taxon>Mollicutes</taxon>
        <taxon>Mycoplasmataceae</taxon>
        <taxon>Mycoplasma</taxon>
    </lineage>
</organism>
<keyword id="KW-0067">ATP-binding</keyword>
<keyword id="KW-0963">Cytoplasm</keyword>
<keyword id="KW-0418">Kinase</keyword>
<keyword id="KW-0547">Nucleotide-binding</keyword>
<keyword id="KW-1185">Reference proteome</keyword>
<keyword id="KW-0808">Transferase</keyword>
<evidence type="ECO:0000250" key="1"/>
<evidence type="ECO:0000305" key="2"/>